<evidence type="ECO:0000255" key="1">
    <source>
        <dbReference type="HAMAP-Rule" id="MF_00365"/>
    </source>
</evidence>
<organism>
    <name type="scientific">Clostridium botulinum (strain Alaska E43 / Type E3)</name>
    <dbReference type="NCBI Taxonomy" id="508767"/>
    <lineage>
        <taxon>Bacteria</taxon>
        <taxon>Bacillati</taxon>
        <taxon>Bacillota</taxon>
        <taxon>Clostridia</taxon>
        <taxon>Eubacteriales</taxon>
        <taxon>Clostridiaceae</taxon>
        <taxon>Clostridium</taxon>
    </lineage>
</organism>
<name>RECF_CLOBA</name>
<keyword id="KW-0067">ATP-binding</keyword>
<keyword id="KW-0963">Cytoplasm</keyword>
<keyword id="KW-0227">DNA damage</keyword>
<keyword id="KW-0234">DNA repair</keyword>
<keyword id="KW-0235">DNA replication</keyword>
<keyword id="KW-0238">DNA-binding</keyword>
<keyword id="KW-0547">Nucleotide-binding</keyword>
<keyword id="KW-0742">SOS response</keyword>
<feature type="chain" id="PRO_1000121097" description="DNA replication and repair protein RecF">
    <location>
        <begin position="1"/>
        <end position="361"/>
    </location>
</feature>
<feature type="binding site" evidence="1">
    <location>
        <begin position="30"/>
        <end position="37"/>
    </location>
    <ligand>
        <name>ATP</name>
        <dbReference type="ChEBI" id="CHEBI:30616"/>
    </ligand>
</feature>
<dbReference type="EMBL" id="CP001078">
    <property type="protein sequence ID" value="ACD54116.1"/>
    <property type="molecule type" value="Genomic_DNA"/>
</dbReference>
<dbReference type="RefSeq" id="WP_012451872.1">
    <property type="nucleotide sequence ID" value="NC_010723.1"/>
</dbReference>
<dbReference type="SMR" id="B2UX46"/>
<dbReference type="KEGG" id="cbt:CLH_0004"/>
<dbReference type="HOGENOM" id="CLU_040267_0_1_9"/>
<dbReference type="GO" id="GO:0005737">
    <property type="term" value="C:cytoplasm"/>
    <property type="evidence" value="ECO:0007669"/>
    <property type="project" value="UniProtKB-SubCell"/>
</dbReference>
<dbReference type="GO" id="GO:0005524">
    <property type="term" value="F:ATP binding"/>
    <property type="evidence" value="ECO:0007669"/>
    <property type="project" value="UniProtKB-UniRule"/>
</dbReference>
<dbReference type="GO" id="GO:0003697">
    <property type="term" value="F:single-stranded DNA binding"/>
    <property type="evidence" value="ECO:0007669"/>
    <property type="project" value="UniProtKB-UniRule"/>
</dbReference>
<dbReference type="GO" id="GO:0006260">
    <property type="term" value="P:DNA replication"/>
    <property type="evidence" value="ECO:0007669"/>
    <property type="project" value="UniProtKB-UniRule"/>
</dbReference>
<dbReference type="GO" id="GO:0000731">
    <property type="term" value="P:DNA synthesis involved in DNA repair"/>
    <property type="evidence" value="ECO:0007669"/>
    <property type="project" value="TreeGrafter"/>
</dbReference>
<dbReference type="GO" id="GO:0006302">
    <property type="term" value="P:double-strand break repair"/>
    <property type="evidence" value="ECO:0007669"/>
    <property type="project" value="TreeGrafter"/>
</dbReference>
<dbReference type="GO" id="GO:0009432">
    <property type="term" value="P:SOS response"/>
    <property type="evidence" value="ECO:0007669"/>
    <property type="project" value="UniProtKB-UniRule"/>
</dbReference>
<dbReference type="CDD" id="cd03242">
    <property type="entry name" value="ABC_RecF"/>
    <property type="match status" value="1"/>
</dbReference>
<dbReference type="Gene3D" id="3.40.50.300">
    <property type="entry name" value="P-loop containing nucleotide triphosphate hydrolases"/>
    <property type="match status" value="1"/>
</dbReference>
<dbReference type="Gene3D" id="1.20.1050.90">
    <property type="entry name" value="RecF/RecN/SMC, N-terminal domain"/>
    <property type="match status" value="1"/>
</dbReference>
<dbReference type="HAMAP" id="MF_00365">
    <property type="entry name" value="RecF"/>
    <property type="match status" value="1"/>
</dbReference>
<dbReference type="InterPro" id="IPR001238">
    <property type="entry name" value="DNA-binding_RecF"/>
</dbReference>
<dbReference type="InterPro" id="IPR018078">
    <property type="entry name" value="DNA-binding_RecF_CS"/>
</dbReference>
<dbReference type="InterPro" id="IPR027417">
    <property type="entry name" value="P-loop_NTPase"/>
</dbReference>
<dbReference type="InterPro" id="IPR003395">
    <property type="entry name" value="RecF/RecN/SMC_N"/>
</dbReference>
<dbReference type="InterPro" id="IPR042174">
    <property type="entry name" value="RecF_2"/>
</dbReference>
<dbReference type="NCBIfam" id="TIGR00611">
    <property type="entry name" value="recf"/>
    <property type="match status" value="1"/>
</dbReference>
<dbReference type="PANTHER" id="PTHR32182">
    <property type="entry name" value="DNA REPLICATION AND REPAIR PROTEIN RECF"/>
    <property type="match status" value="1"/>
</dbReference>
<dbReference type="PANTHER" id="PTHR32182:SF0">
    <property type="entry name" value="DNA REPLICATION AND REPAIR PROTEIN RECF"/>
    <property type="match status" value="1"/>
</dbReference>
<dbReference type="Pfam" id="PF02463">
    <property type="entry name" value="SMC_N"/>
    <property type="match status" value="1"/>
</dbReference>
<dbReference type="SUPFAM" id="SSF52540">
    <property type="entry name" value="P-loop containing nucleoside triphosphate hydrolases"/>
    <property type="match status" value="1"/>
</dbReference>
<dbReference type="PROSITE" id="PS00617">
    <property type="entry name" value="RECF_1"/>
    <property type="match status" value="1"/>
</dbReference>
<dbReference type="PROSITE" id="PS00618">
    <property type="entry name" value="RECF_2"/>
    <property type="match status" value="1"/>
</dbReference>
<protein>
    <recommendedName>
        <fullName evidence="1">DNA replication and repair protein RecF</fullName>
    </recommendedName>
</protein>
<accession>B2UX46</accession>
<gene>
    <name evidence="1" type="primary">recF</name>
    <name type="ordered locus">CLH_0004</name>
</gene>
<comment type="function">
    <text evidence="1">The RecF protein is involved in DNA metabolism; it is required for DNA replication and normal SOS inducibility. RecF binds preferentially to single-stranded, linear DNA. It also seems to bind ATP.</text>
</comment>
<comment type="subcellular location">
    <subcellularLocation>
        <location evidence="1">Cytoplasm</location>
    </subcellularLocation>
</comment>
<comment type="similarity">
    <text evidence="1">Belongs to the RecF family.</text>
</comment>
<reference key="1">
    <citation type="submission" date="2008-05" db="EMBL/GenBank/DDBJ databases">
        <title>Complete genome sequence of Clostridium botulinum E3 str. Alaska E43.</title>
        <authorList>
            <person name="Brinkac L.M."/>
            <person name="Brown J.L."/>
            <person name="Bruce D."/>
            <person name="Detter C."/>
            <person name="Munk C."/>
            <person name="Smith L.A."/>
            <person name="Smith T.J."/>
            <person name="Sutton G."/>
            <person name="Brettin T.S."/>
        </authorList>
    </citation>
    <scope>NUCLEOTIDE SEQUENCE [LARGE SCALE GENOMIC DNA]</scope>
    <source>
        <strain>Alaska E43 / Type E3</strain>
    </source>
</reference>
<sequence>MYIKAIMLANYRNYNNLELNLSEGVNVFIGDNAQGKTNVLESIYYCAFAKSHRTSRDKDLINWKENEAYISLLVGKKRLDKRIDIKILRDGKKAIKVNSIKINKIGELFGTFNVVMFSPEDLKIIKESPGIRRKFLDMELCQISKKYYFNLVQYNKILNERNVILRSRDFNKDILEVYDLQLVECADYIVKERLEYIDKINYYGKFIHNEITSGKEDIVFKYDSGIKFKDNFKYAFLEKLRNNLLRDREQGITSVGPHRDDFNVLINNIDVKKFGSQGQQRTAVLTMKFSSLKIIKEITKEYPILLLDDVLSELDINRKRYVLSTLSDIQTIITCTGINDLEDYLDDKSKVFNVCNGEIVN</sequence>
<proteinExistence type="inferred from homology"/>